<accession>P0CW50</accession>
<accession>P71526</accession>
<gene>
    <name type="primary">nifD</name>
</gene>
<dbReference type="EC" id="1.18.6.1"/>
<dbReference type="EMBL" id="U75887">
    <property type="protein sequence ID" value="AAC45515.1"/>
    <property type="molecule type" value="Genomic_DNA"/>
</dbReference>
<dbReference type="PIR" id="T10093">
    <property type="entry name" value="T10093"/>
</dbReference>
<dbReference type="SMR" id="P0CW50"/>
<dbReference type="DIP" id="DIP-61201N"/>
<dbReference type="IntAct" id="P0CW50">
    <property type="interactions" value="3"/>
</dbReference>
<dbReference type="GO" id="GO:0005524">
    <property type="term" value="F:ATP binding"/>
    <property type="evidence" value="ECO:0007669"/>
    <property type="project" value="UniProtKB-KW"/>
</dbReference>
<dbReference type="GO" id="GO:0051536">
    <property type="term" value="F:iron-sulfur cluster binding"/>
    <property type="evidence" value="ECO:0007669"/>
    <property type="project" value="UniProtKB-KW"/>
</dbReference>
<dbReference type="GO" id="GO:0046872">
    <property type="term" value="F:metal ion binding"/>
    <property type="evidence" value="ECO:0007669"/>
    <property type="project" value="UniProtKB-KW"/>
</dbReference>
<dbReference type="GO" id="GO:0016163">
    <property type="term" value="F:nitrogenase activity"/>
    <property type="evidence" value="ECO:0007669"/>
    <property type="project" value="UniProtKB-EC"/>
</dbReference>
<dbReference type="GO" id="GO:0009399">
    <property type="term" value="P:nitrogen fixation"/>
    <property type="evidence" value="ECO:0007669"/>
    <property type="project" value="UniProtKB-KW"/>
</dbReference>
<dbReference type="Gene3D" id="3.40.50.12380">
    <property type="entry name" value="Nitrogenase MoFe cofactor biosynthesis protein NifE, C-terminal"/>
    <property type="match status" value="1"/>
</dbReference>
<dbReference type="Gene3D" id="3.40.50.1980">
    <property type="entry name" value="Nitrogenase molybdenum iron protein domain"/>
    <property type="match status" value="1"/>
</dbReference>
<dbReference type="InterPro" id="IPR000510">
    <property type="entry name" value="Nase/OxRdtase_comp1"/>
</dbReference>
<dbReference type="InterPro" id="IPR005974">
    <property type="entry name" value="Nase_asu"/>
</dbReference>
<dbReference type="InterPro" id="IPR010143">
    <property type="entry name" value="Nase_comp1_asu"/>
</dbReference>
<dbReference type="InterPro" id="IPR000318">
    <property type="entry name" value="Nase_comp1_CS"/>
</dbReference>
<dbReference type="NCBIfam" id="TIGR01284">
    <property type="entry name" value="alt_nitrog_alph"/>
    <property type="match status" value="1"/>
</dbReference>
<dbReference type="NCBIfam" id="TIGR01862">
    <property type="entry name" value="N2-ase-Ialpha"/>
    <property type="match status" value="1"/>
</dbReference>
<dbReference type="PANTHER" id="PTHR43457">
    <property type="entry name" value="NITROGENASE MOLYBDENUM-IRON PROTEIN ALPHA CHAIN"/>
    <property type="match status" value="1"/>
</dbReference>
<dbReference type="PANTHER" id="PTHR43457:SF1">
    <property type="entry name" value="NITROGENASE MOLYBDENUM-IRON PROTEIN ALPHA CHAIN"/>
    <property type="match status" value="1"/>
</dbReference>
<dbReference type="Pfam" id="PF00148">
    <property type="entry name" value="Oxidored_nitro"/>
    <property type="match status" value="1"/>
</dbReference>
<dbReference type="SUPFAM" id="SSF53807">
    <property type="entry name" value="Helical backbone' metal receptor"/>
    <property type="match status" value="1"/>
</dbReference>
<dbReference type="PROSITE" id="PS00090">
    <property type="entry name" value="NITROGENASE_1_2"/>
    <property type="match status" value="1"/>
</dbReference>
<protein>
    <recommendedName>
        <fullName>Nitrogenase molybdenum-iron protein alpha chain</fullName>
        <ecNumber>1.18.6.1</ecNumber>
    </recommendedName>
    <alternativeName>
        <fullName>Dinitrogenase</fullName>
    </alternativeName>
    <alternativeName>
        <fullName>Nitrogenase component I</fullName>
    </alternativeName>
</protein>
<keyword id="KW-0067">ATP-binding</keyword>
<keyword id="KW-0408">Iron</keyword>
<keyword id="KW-0411">Iron-sulfur</keyword>
<keyword id="KW-0479">Metal-binding</keyword>
<keyword id="KW-0500">Molybdenum</keyword>
<keyword id="KW-0535">Nitrogen fixation</keyword>
<keyword id="KW-0547">Nucleotide-binding</keyword>
<keyword id="KW-0560">Oxidoreductase</keyword>
<sequence length="477" mass="53314">MPFCLLDVDKDIPEREQHIYIKDSKEPKGHCKQRCNTNTIPGSMTERGCAFAGVKGVITGAIKDVLHVVHSPVGCTAYGNGTTKRYPTRPEMPDGSVFPVENFNLKHIVGTDLTESDVVFGGMNKLKKVIREASKEFPFVNAIYVYATCTTGLIGDDLDAVCKEMQAELGKDVVAFNAPGFAGPTQSKGHHVGNYTIFENLVGTKEPPKTTDYDINLIGEYNIDGDYWVLEKYFEDMGINVLSKFTGDATHGELCWMHKAKLSLVRCQRSATYVAKLIEEKYGVPYLKVDFFGPEYCAENLRAVGKYFGKEIEAEAVIQKEMEKIQPELDFYQSKLQGKKIWISAGGPKSWHLSKPIEQYLGMDVVALSGLFEHEDGYEKMQERAKDGTIIIDDPNTLEMEEVVEKYQPEIVLGGIKEKYFFHKLGVPSVMIHSYENGPYIGFGGFVNMARDIFTAIYNPAWKLMGFGEGEPGDSNE</sequence>
<feature type="chain" id="PRO_0000153072" description="Nitrogenase molybdenum-iron protein alpha chain">
    <location>
        <begin position="1"/>
        <end position="477"/>
    </location>
</feature>
<feature type="binding site" evidence="1">
    <location>
        <position position="49"/>
    </location>
    <ligand>
        <name>[8Fe-7S] cluster</name>
        <dbReference type="ChEBI" id="CHEBI:21143"/>
        <note>ligand shared with beta chain</note>
    </ligand>
</feature>
<feature type="binding site" evidence="1">
    <location>
        <position position="75"/>
    </location>
    <ligand>
        <name>[8Fe-7S] cluster</name>
        <dbReference type="ChEBI" id="CHEBI:21143"/>
        <note>ligand shared with beta chain</note>
    </ligand>
</feature>
<feature type="binding site" evidence="1">
    <location>
        <position position="149"/>
    </location>
    <ligand>
        <name>[8Fe-7S] cluster</name>
        <dbReference type="ChEBI" id="CHEBI:21143"/>
        <note>ligand shared with beta chain</note>
    </ligand>
</feature>
<feature type="binding site" evidence="1">
    <location>
        <position position="267"/>
    </location>
    <ligand>
        <name>[7Fe-Mo-9S-C-homocitryl] cluster</name>
        <dbReference type="ChEBI" id="CHEBI:30409"/>
    </ligand>
</feature>
<feature type="binding site" evidence="1">
    <location>
        <position position="433"/>
    </location>
    <ligand>
        <name>[7Fe-Mo-9S-C-homocitryl] cluster</name>
        <dbReference type="ChEBI" id="CHEBI:30409"/>
    </ligand>
</feature>
<reference key="1">
    <citation type="journal article" date="1997" name="J. Bacteriol.">
        <title>Nitrogenase phylogeny and the molybdenum dependence of nitrogen fixation in Methanococcus maripaludis.</title>
        <authorList>
            <person name="Kessler P.S."/>
            <person name="McLarnan J."/>
            <person name="Leigh J.A."/>
        </authorList>
    </citation>
    <scope>NUCLEOTIDE SEQUENCE [GENOMIC DNA]</scope>
    <source>
        <strain>ATCC 43000 / DSM 2067 / JCM 10722 / JJ</strain>
    </source>
</reference>
<name>NIFD_METMI</name>
<organism>
    <name type="scientific">Methanococcus maripaludis</name>
    <name type="common">Methanococcus deltae</name>
    <dbReference type="NCBI Taxonomy" id="39152"/>
    <lineage>
        <taxon>Archaea</taxon>
        <taxon>Methanobacteriati</taxon>
        <taxon>Methanobacteriota</taxon>
        <taxon>Methanomada group</taxon>
        <taxon>Methanococci</taxon>
        <taxon>Methanococcales</taxon>
        <taxon>Methanococcaceae</taxon>
        <taxon>Methanococcus</taxon>
    </lineage>
</organism>
<evidence type="ECO:0000250" key="1"/>
<evidence type="ECO:0000305" key="2"/>
<comment type="function">
    <text>This molybdenum-iron protein is part of the nitrogenase complex that catalyzes the key enzymatic reactions in nitrogen fixation.</text>
</comment>
<comment type="catalytic activity">
    <reaction>
        <text>N2 + 8 reduced [2Fe-2S]-[ferredoxin] + 16 ATP + 16 H2O = H2 + 8 oxidized [2Fe-2S]-[ferredoxin] + 2 NH4(+) + 16 ADP + 16 phosphate + 6 H(+)</text>
        <dbReference type="Rhea" id="RHEA:21448"/>
        <dbReference type="Rhea" id="RHEA-COMP:10000"/>
        <dbReference type="Rhea" id="RHEA-COMP:10001"/>
        <dbReference type="ChEBI" id="CHEBI:15377"/>
        <dbReference type="ChEBI" id="CHEBI:15378"/>
        <dbReference type="ChEBI" id="CHEBI:17997"/>
        <dbReference type="ChEBI" id="CHEBI:18276"/>
        <dbReference type="ChEBI" id="CHEBI:28938"/>
        <dbReference type="ChEBI" id="CHEBI:30616"/>
        <dbReference type="ChEBI" id="CHEBI:33737"/>
        <dbReference type="ChEBI" id="CHEBI:33738"/>
        <dbReference type="ChEBI" id="CHEBI:43474"/>
        <dbReference type="ChEBI" id="CHEBI:456216"/>
        <dbReference type="EC" id="1.18.6.1"/>
    </reaction>
</comment>
<comment type="cofactor">
    <cofactor evidence="1">
        <name>[8Fe-7S] cluster</name>
        <dbReference type="ChEBI" id="CHEBI:21143"/>
    </cofactor>
    <text evidence="1">Binds 1 [8Fe-7S] cluster per heterodimer.</text>
</comment>
<comment type="cofactor">
    <cofactor evidence="1">
        <name>[7Fe-Mo-9S-C-homocitryl] cluster</name>
        <dbReference type="ChEBI" id="CHEBI:30409"/>
    </cofactor>
    <text evidence="1">Binds 1 [7Fe-Mo-9S-C-homocitryl] cluster per subunit.</text>
</comment>
<comment type="subunit">
    <text>Tetramer of two alpha and two beta chains. Forms complex with the iron protein (nitrogenase component 2).</text>
</comment>
<comment type="similarity">
    <text evidence="2">Belongs to the NifD/NifK/NifE/NifN family.</text>
</comment>
<proteinExistence type="inferred from homology"/>